<comment type="function">
    <text evidence="1">Necessary for the introduction of cis unsaturation into fatty acids. Catalyzes the dehydration of (3R)-3-hydroxydecanoyl-ACP to E-(2)-decenoyl-ACP and then its isomerization to Z-(3)-decenoyl-ACP. Can catalyze the dehydratase reaction for beta-hydroxyacyl-ACPs with saturated chain lengths up to 16:0, being most active on intermediate chain length.</text>
</comment>
<comment type="catalytic activity">
    <reaction evidence="1">
        <text>a (3R)-hydroxyacyl-[ACP] = a (2E)-enoyl-[ACP] + H2O</text>
        <dbReference type="Rhea" id="RHEA:13097"/>
        <dbReference type="Rhea" id="RHEA-COMP:9925"/>
        <dbReference type="Rhea" id="RHEA-COMP:9945"/>
        <dbReference type="ChEBI" id="CHEBI:15377"/>
        <dbReference type="ChEBI" id="CHEBI:78784"/>
        <dbReference type="ChEBI" id="CHEBI:78827"/>
        <dbReference type="EC" id="4.2.1.59"/>
    </reaction>
</comment>
<comment type="catalytic activity">
    <reaction evidence="1">
        <text>(3R)-hydroxydecanoyl-[ACP] = (2E)-decenoyl-[ACP] + H2O</text>
        <dbReference type="Rhea" id="RHEA:41860"/>
        <dbReference type="Rhea" id="RHEA-COMP:9638"/>
        <dbReference type="Rhea" id="RHEA-COMP:9639"/>
        <dbReference type="ChEBI" id="CHEBI:15377"/>
        <dbReference type="ChEBI" id="CHEBI:78466"/>
        <dbReference type="ChEBI" id="CHEBI:78467"/>
    </reaction>
</comment>
<comment type="catalytic activity">
    <reaction evidence="1">
        <text>(2E)-decenoyl-[ACP] = (3Z)-decenoyl-[ACP]</text>
        <dbReference type="Rhea" id="RHEA:23568"/>
        <dbReference type="Rhea" id="RHEA-COMP:9639"/>
        <dbReference type="Rhea" id="RHEA-COMP:9927"/>
        <dbReference type="ChEBI" id="CHEBI:78467"/>
        <dbReference type="ChEBI" id="CHEBI:78798"/>
        <dbReference type="EC" id="5.3.3.14"/>
    </reaction>
</comment>
<comment type="pathway">
    <text evidence="1">Lipid metabolism; fatty acid biosynthesis.</text>
</comment>
<comment type="subunit">
    <text evidence="1">Homodimer.</text>
</comment>
<comment type="subcellular location">
    <subcellularLocation>
        <location evidence="1">Cytoplasm</location>
    </subcellularLocation>
</comment>
<comment type="similarity">
    <text evidence="1">Belongs to the thioester dehydratase family. FabA subfamily.</text>
</comment>
<accession>P64103</accession>
<accession>Q8YEC2</accession>
<feature type="chain" id="PRO_0000091590" description="3-hydroxydecanoyl-[acyl-carrier-protein] dehydratase">
    <location>
        <begin position="1"/>
        <end position="172"/>
    </location>
</feature>
<feature type="active site" evidence="1">
    <location>
        <position position="71"/>
    </location>
</feature>
<gene>
    <name evidence="1" type="primary">fabA</name>
    <name type="ordered locus">BMEI1956</name>
</gene>
<name>FABA_BRUME</name>
<proteinExistence type="inferred from homology"/>
<evidence type="ECO:0000255" key="1">
    <source>
        <dbReference type="HAMAP-Rule" id="MF_00405"/>
    </source>
</evidence>
<keyword id="KW-0963">Cytoplasm</keyword>
<keyword id="KW-0275">Fatty acid biosynthesis</keyword>
<keyword id="KW-0276">Fatty acid metabolism</keyword>
<keyword id="KW-0413">Isomerase</keyword>
<keyword id="KW-0444">Lipid biosynthesis</keyword>
<keyword id="KW-0443">Lipid metabolism</keyword>
<keyword id="KW-0456">Lyase</keyword>
<dbReference type="EC" id="4.2.1.59" evidence="1"/>
<dbReference type="EC" id="5.3.3.14" evidence="1"/>
<dbReference type="EMBL" id="AE008917">
    <property type="protein sequence ID" value="AAL53137.1"/>
    <property type="molecule type" value="Genomic_DNA"/>
</dbReference>
<dbReference type="PIR" id="AF3496">
    <property type="entry name" value="AF3496"/>
</dbReference>
<dbReference type="RefSeq" id="WP_002968051.1">
    <property type="nucleotide sequence ID" value="NZ_GG703778.1"/>
</dbReference>
<dbReference type="SMR" id="P64103"/>
<dbReference type="GeneID" id="97534574"/>
<dbReference type="KEGG" id="bme:BMEI1956"/>
<dbReference type="KEGG" id="bmel:DK63_1534"/>
<dbReference type="PATRIC" id="fig|224914.52.peg.1620"/>
<dbReference type="eggNOG" id="COG0764">
    <property type="taxonomic scope" value="Bacteria"/>
</dbReference>
<dbReference type="PhylomeDB" id="P64103"/>
<dbReference type="UniPathway" id="UPA00094"/>
<dbReference type="Proteomes" id="UP000000419">
    <property type="component" value="Chromosome I"/>
</dbReference>
<dbReference type="GO" id="GO:0005737">
    <property type="term" value="C:cytoplasm"/>
    <property type="evidence" value="ECO:0007669"/>
    <property type="project" value="UniProtKB-SubCell"/>
</dbReference>
<dbReference type="GO" id="GO:0019171">
    <property type="term" value="F:(3R)-hydroxyacyl-[acyl-carrier-protein] dehydratase activity"/>
    <property type="evidence" value="ECO:0007669"/>
    <property type="project" value="UniProtKB-UniRule"/>
</dbReference>
<dbReference type="GO" id="GO:0034017">
    <property type="term" value="F:trans-2-decenoyl-acyl-carrier-protein isomerase activity"/>
    <property type="evidence" value="ECO:0007669"/>
    <property type="project" value="UniProtKB-UniRule"/>
</dbReference>
<dbReference type="GO" id="GO:0006636">
    <property type="term" value="P:unsaturated fatty acid biosynthetic process"/>
    <property type="evidence" value="ECO:0007669"/>
    <property type="project" value="UniProtKB-UniRule"/>
</dbReference>
<dbReference type="CDD" id="cd01287">
    <property type="entry name" value="FabA"/>
    <property type="match status" value="1"/>
</dbReference>
<dbReference type="Gene3D" id="3.10.129.10">
    <property type="entry name" value="Hotdog Thioesterase"/>
    <property type="match status" value="1"/>
</dbReference>
<dbReference type="HAMAP" id="MF_00405">
    <property type="entry name" value="FabA"/>
    <property type="match status" value="1"/>
</dbReference>
<dbReference type="InterPro" id="IPR010083">
    <property type="entry name" value="FabA"/>
</dbReference>
<dbReference type="InterPro" id="IPR013114">
    <property type="entry name" value="FabA_FabZ"/>
</dbReference>
<dbReference type="InterPro" id="IPR029069">
    <property type="entry name" value="HotDog_dom_sf"/>
</dbReference>
<dbReference type="NCBIfam" id="TIGR01749">
    <property type="entry name" value="fabA"/>
    <property type="match status" value="1"/>
</dbReference>
<dbReference type="NCBIfam" id="NF003509">
    <property type="entry name" value="PRK05174.1"/>
    <property type="match status" value="1"/>
</dbReference>
<dbReference type="PANTHER" id="PTHR30272">
    <property type="entry name" value="3-HYDROXYACYL-[ACYL-CARRIER-PROTEIN] DEHYDRATASE"/>
    <property type="match status" value="1"/>
</dbReference>
<dbReference type="PANTHER" id="PTHR30272:SF8">
    <property type="entry name" value="3-HYDROXYDECANOYL-[ACYL-CARRIER-PROTEIN] DEHYDRATASE"/>
    <property type="match status" value="1"/>
</dbReference>
<dbReference type="Pfam" id="PF07977">
    <property type="entry name" value="FabA"/>
    <property type="match status" value="1"/>
</dbReference>
<dbReference type="SUPFAM" id="SSF54637">
    <property type="entry name" value="Thioesterase/thiol ester dehydrase-isomerase"/>
    <property type="match status" value="1"/>
</dbReference>
<organism>
    <name type="scientific">Brucella melitensis biotype 1 (strain ATCC 23456 / CCUG 17765 / NCTC 10094 / 16M)</name>
    <dbReference type="NCBI Taxonomy" id="224914"/>
    <lineage>
        <taxon>Bacteria</taxon>
        <taxon>Pseudomonadati</taxon>
        <taxon>Pseudomonadota</taxon>
        <taxon>Alphaproteobacteria</taxon>
        <taxon>Hyphomicrobiales</taxon>
        <taxon>Brucellaceae</taxon>
        <taxon>Brucella/Ochrobactrum group</taxon>
        <taxon>Brucella</taxon>
    </lineage>
</organism>
<reference key="1">
    <citation type="journal article" date="2002" name="Proc. Natl. Acad. Sci. U.S.A.">
        <title>The genome sequence of the facultative intracellular pathogen Brucella melitensis.</title>
        <authorList>
            <person name="DelVecchio V.G."/>
            <person name="Kapatral V."/>
            <person name="Redkar R.J."/>
            <person name="Patra G."/>
            <person name="Mujer C."/>
            <person name="Los T."/>
            <person name="Ivanova N."/>
            <person name="Anderson I."/>
            <person name="Bhattacharyya A."/>
            <person name="Lykidis A."/>
            <person name="Reznik G."/>
            <person name="Jablonski L."/>
            <person name="Larsen N."/>
            <person name="D'Souza M."/>
            <person name="Bernal A."/>
            <person name="Mazur M."/>
            <person name="Goltsman E."/>
            <person name="Selkov E."/>
            <person name="Elzer P.H."/>
            <person name="Hagius S."/>
            <person name="O'Callaghan D."/>
            <person name="Letesson J.-J."/>
            <person name="Haselkorn R."/>
            <person name="Kyrpides N.C."/>
            <person name="Overbeek R."/>
        </authorList>
    </citation>
    <scope>NUCLEOTIDE SEQUENCE [LARGE SCALE GENOMIC DNA]</scope>
    <source>
        <strain>ATCC 23456 / CCUG 17765 / NCTC 10094 / 16M</strain>
    </source>
</reference>
<protein>
    <recommendedName>
        <fullName evidence="1">3-hydroxydecanoyl-[acyl-carrier-protein] dehydratase</fullName>
        <ecNumber evidence="1">4.2.1.59</ecNumber>
    </recommendedName>
    <alternativeName>
        <fullName evidence="1">3-hydroxyacyl-[acyl-carrier-protein] dehydratase FabA</fullName>
    </alternativeName>
    <alternativeName>
        <fullName evidence="1">Beta-hydroxydecanoyl thioester dehydrase</fullName>
    </alternativeName>
    <alternativeName>
        <fullName evidence="1">Trans-2-decenoyl-[acyl-carrier-protein] isomerase</fullName>
        <ecNumber evidence="1">5.3.3.14</ecNumber>
    </alternativeName>
</protein>
<sequence>MAEQKSSYGYEELLACGRGEMFGPGNAQLPLPPMLMIHRITEISETGGAFDKGYIRAEYDVRPDDWYFPCHFQGNPIMPGCLGLDGMWQLTGFFLGWLGEPGRGMALSTGEVKFKGMVRPHTKLLEYGIDFKRVMRGRLVLGTADGWLKADGELIYQATDLRVGLSKEGSAQ</sequence>